<name>GLPK_PSEF5</name>
<organism>
    <name type="scientific">Pseudomonas fluorescens (strain ATCC BAA-477 / NRRL B-23932 / Pf-5)</name>
    <dbReference type="NCBI Taxonomy" id="220664"/>
    <lineage>
        <taxon>Bacteria</taxon>
        <taxon>Pseudomonadati</taxon>
        <taxon>Pseudomonadota</taxon>
        <taxon>Gammaproteobacteria</taxon>
        <taxon>Pseudomonadales</taxon>
        <taxon>Pseudomonadaceae</taxon>
        <taxon>Pseudomonas</taxon>
    </lineage>
</organism>
<comment type="function">
    <text evidence="1">Key enzyme in the regulation of glycerol uptake and metabolism. Catalyzes the phosphorylation of glycerol to yield sn-glycerol 3-phosphate.</text>
</comment>
<comment type="catalytic activity">
    <reaction evidence="1">
        <text>glycerol + ATP = sn-glycerol 3-phosphate + ADP + H(+)</text>
        <dbReference type="Rhea" id="RHEA:21644"/>
        <dbReference type="ChEBI" id="CHEBI:15378"/>
        <dbReference type="ChEBI" id="CHEBI:17754"/>
        <dbReference type="ChEBI" id="CHEBI:30616"/>
        <dbReference type="ChEBI" id="CHEBI:57597"/>
        <dbReference type="ChEBI" id="CHEBI:456216"/>
        <dbReference type="EC" id="2.7.1.30"/>
    </reaction>
</comment>
<comment type="activity regulation">
    <text evidence="1">Inhibited by fructose 1,6-bisphosphate (FBP).</text>
</comment>
<comment type="pathway">
    <text evidence="1">Polyol metabolism; glycerol degradation via glycerol kinase pathway; sn-glycerol 3-phosphate from glycerol: step 1/1.</text>
</comment>
<comment type="similarity">
    <text evidence="1">Belongs to the FGGY kinase family.</text>
</comment>
<proteinExistence type="inferred from homology"/>
<evidence type="ECO:0000255" key="1">
    <source>
        <dbReference type="HAMAP-Rule" id="MF_00186"/>
    </source>
</evidence>
<accession>Q4K734</accession>
<sequence length="501" mass="55526">MTDIQNKNYIIALDQGTTSSRAIIFDRDANVVCTAQREFAQHYPQAGWVEHDPMEIFATQSAVMVEALAQAGLHHDQVAAIGITNQRETTVVWDKNTGRPIYNAIVWQCRRSTEICQQLKRDGLEDYIRETTGLVTDPYFSGTKLKWILDNVEGSRERARNGELLFGTIDSWLIWKFTGGKTHVTDYTNASRTMLFNIHTLEWDAKMLEVLDIPREMLPEVKSSSEIYGRTKSGIAIGGIAGDQQAALFGQMCVEPGQAKNTYGTGCFLLMNTGDKAVKSQHGMLTTIACGPSGEVAYALEGAVFNGGSTVQWLRDELKIINDAHDTEYFAGKVKDSNGVYLVPAFTGLGAPYWDPYARGALFGLTRGVRVDHIIRAALESIAYQTRDVLDAMQQDSGERLKALRVDGGAVANNFLMQFQADILGTQVERPQMRETTALGAAYLAGLACGFWGSLEELRGKAVIEREFEPQLAEAEKEGLYAGWKKAVSRTRDWEPHDEAK</sequence>
<feature type="chain" id="PRO_1000020759" description="Glycerol kinase">
    <location>
        <begin position="1"/>
        <end position="501"/>
    </location>
</feature>
<feature type="binding site" evidence="1">
    <location>
        <position position="17"/>
    </location>
    <ligand>
        <name>ADP</name>
        <dbReference type="ChEBI" id="CHEBI:456216"/>
    </ligand>
</feature>
<feature type="binding site" evidence="1">
    <location>
        <position position="17"/>
    </location>
    <ligand>
        <name>ATP</name>
        <dbReference type="ChEBI" id="CHEBI:30616"/>
    </ligand>
</feature>
<feature type="binding site" evidence="1">
    <location>
        <position position="17"/>
    </location>
    <ligand>
        <name>sn-glycerol 3-phosphate</name>
        <dbReference type="ChEBI" id="CHEBI:57597"/>
    </ligand>
</feature>
<feature type="binding site" evidence="1">
    <location>
        <position position="18"/>
    </location>
    <ligand>
        <name>ATP</name>
        <dbReference type="ChEBI" id="CHEBI:30616"/>
    </ligand>
</feature>
<feature type="binding site" evidence="1">
    <location>
        <position position="19"/>
    </location>
    <ligand>
        <name>ATP</name>
        <dbReference type="ChEBI" id="CHEBI:30616"/>
    </ligand>
</feature>
<feature type="binding site" evidence="1">
    <location>
        <position position="21"/>
    </location>
    <ligand>
        <name>ADP</name>
        <dbReference type="ChEBI" id="CHEBI:456216"/>
    </ligand>
</feature>
<feature type="binding site" evidence="1">
    <location>
        <position position="87"/>
    </location>
    <ligand>
        <name>glycerol</name>
        <dbReference type="ChEBI" id="CHEBI:17754"/>
    </ligand>
</feature>
<feature type="binding site" evidence="1">
    <location>
        <position position="87"/>
    </location>
    <ligand>
        <name>sn-glycerol 3-phosphate</name>
        <dbReference type="ChEBI" id="CHEBI:57597"/>
    </ligand>
</feature>
<feature type="binding site" evidence="1">
    <location>
        <position position="88"/>
    </location>
    <ligand>
        <name>glycerol</name>
        <dbReference type="ChEBI" id="CHEBI:17754"/>
    </ligand>
</feature>
<feature type="binding site" evidence="1">
    <location>
        <position position="88"/>
    </location>
    <ligand>
        <name>sn-glycerol 3-phosphate</name>
        <dbReference type="ChEBI" id="CHEBI:57597"/>
    </ligand>
</feature>
<feature type="binding site" evidence="1">
    <location>
        <position position="139"/>
    </location>
    <ligand>
        <name>glycerol</name>
        <dbReference type="ChEBI" id="CHEBI:17754"/>
    </ligand>
</feature>
<feature type="binding site" evidence="1">
    <location>
        <position position="139"/>
    </location>
    <ligand>
        <name>sn-glycerol 3-phosphate</name>
        <dbReference type="ChEBI" id="CHEBI:57597"/>
    </ligand>
</feature>
<feature type="binding site" evidence="1">
    <location>
        <position position="243"/>
    </location>
    <ligand>
        <name>glycerol</name>
        <dbReference type="ChEBI" id="CHEBI:17754"/>
    </ligand>
</feature>
<feature type="binding site" evidence="1">
    <location>
        <position position="243"/>
    </location>
    <ligand>
        <name>sn-glycerol 3-phosphate</name>
        <dbReference type="ChEBI" id="CHEBI:57597"/>
    </ligand>
</feature>
<feature type="binding site" evidence="1">
    <location>
        <position position="244"/>
    </location>
    <ligand>
        <name>glycerol</name>
        <dbReference type="ChEBI" id="CHEBI:17754"/>
    </ligand>
</feature>
<feature type="binding site" evidence="1">
    <location>
        <position position="265"/>
    </location>
    <ligand>
        <name>ADP</name>
        <dbReference type="ChEBI" id="CHEBI:456216"/>
    </ligand>
</feature>
<feature type="binding site" evidence="1">
    <location>
        <position position="265"/>
    </location>
    <ligand>
        <name>ATP</name>
        <dbReference type="ChEBI" id="CHEBI:30616"/>
    </ligand>
</feature>
<feature type="binding site" evidence="1">
    <location>
        <position position="308"/>
    </location>
    <ligand>
        <name>ADP</name>
        <dbReference type="ChEBI" id="CHEBI:456216"/>
    </ligand>
</feature>
<feature type="binding site" evidence="1">
    <location>
        <position position="308"/>
    </location>
    <ligand>
        <name>ATP</name>
        <dbReference type="ChEBI" id="CHEBI:30616"/>
    </ligand>
</feature>
<feature type="binding site" evidence="1">
    <location>
        <position position="312"/>
    </location>
    <ligand>
        <name>ATP</name>
        <dbReference type="ChEBI" id="CHEBI:30616"/>
    </ligand>
</feature>
<feature type="binding site" evidence="1">
    <location>
        <position position="409"/>
    </location>
    <ligand>
        <name>ADP</name>
        <dbReference type="ChEBI" id="CHEBI:456216"/>
    </ligand>
</feature>
<feature type="binding site" evidence="1">
    <location>
        <position position="409"/>
    </location>
    <ligand>
        <name>ATP</name>
        <dbReference type="ChEBI" id="CHEBI:30616"/>
    </ligand>
</feature>
<feature type="binding site" evidence="1">
    <location>
        <position position="413"/>
    </location>
    <ligand>
        <name>ADP</name>
        <dbReference type="ChEBI" id="CHEBI:456216"/>
    </ligand>
</feature>
<gene>
    <name evidence="1" type="primary">glpK</name>
    <name type="ordered locus">PFL_4868</name>
</gene>
<reference key="1">
    <citation type="journal article" date="2005" name="Nat. Biotechnol.">
        <title>Complete genome sequence of the plant commensal Pseudomonas fluorescens Pf-5.</title>
        <authorList>
            <person name="Paulsen I.T."/>
            <person name="Press C.M."/>
            <person name="Ravel J."/>
            <person name="Kobayashi D.Y."/>
            <person name="Myers G.S.A."/>
            <person name="Mavrodi D.V."/>
            <person name="DeBoy R.T."/>
            <person name="Seshadri R."/>
            <person name="Ren Q."/>
            <person name="Madupu R."/>
            <person name="Dodson R.J."/>
            <person name="Durkin A.S."/>
            <person name="Brinkac L.M."/>
            <person name="Daugherty S.C."/>
            <person name="Sullivan S.A."/>
            <person name="Rosovitz M.J."/>
            <person name="Gwinn M.L."/>
            <person name="Zhou L."/>
            <person name="Schneider D.J."/>
            <person name="Cartinhour S.W."/>
            <person name="Nelson W.C."/>
            <person name="Weidman J."/>
            <person name="Watkins K."/>
            <person name="Tran K."/>
            <person name="Khouri H."/>
            <person name="Pierson E.A."/>
            <person name="Pierson L.S. III"/>
            <person name="Thomashow L.S."/>
            <person name="Loper J.E."/>
        </authorList>
    </citation>
    <scope>NUCLEOTIDE SEQUENCE [LARGE SCALE GENOMIC DNA]</scope>
    <source>
        <strain>ATCC BAA-477 / NRRL B-23932 / Pf-5</strain>
    </source>
</reference>
<protein>
    <recommendedName>
        <fullName evidence="1">Glycerol kinase</fullName>
        <ecNumber evidence="1">2.7.1.30</ecNumber>
    </recommendedName>
    <alternativeName>
        <fullName evidence="1">ATP:glycerol 3-phosphotransferase</fullName>
    </alternativeName>
    <alternativeName>
        <fullName evidence="1">Glycerokinase</fullName>
        <shortName evidence="1">GK</shortName>
    </alternativeName>
</protein>
<keyword id="KW-0067">ATP-binding</keyword>
<keyword id="KW-0319">Glycerol metabolism</keyword>
<keyword id="KW-0418">Kinase</keyword>
<keyword id="KW-0547">Nucleotide-binding</keyword>
<keyword id="KW-0808">Transferase</keyword>
<dbReference type="EC" id="2.7.1.30" evidence="1"/>
<dbReference type="EMBL" id="CP000076">
    <property type="protein sequence ID" value="AAY94098.1"/>
    <property type="molecule type" value="Genomic_DNA"/>
</dbReference>
<dbReference type="RefSeq" id="WP_011063122.1">
    <property type="nucleotide sequence ID" value="NC_004129.6"/>
</dbReference>
<dbReference type="SMR" id="Q4K734"/>
<dbReference type="STRING" id="220664.PFL_4868"/>
<dbReference type="KEGG" id="pfl:PFL_4868"/>
<dbReference type="PATRIC" id="fig|220664.5.peg.4984"/>
<dbReference type="eggNOG" id="COG0554">
    <property type="taxonomic scope" value="Bacteria"/>
</dbReference>
<dbReference type="HOGENOM" id="CLU_009281_2_3_6"/>
<dbReference type="UniPathway" id="UPA00618">
    <property type="reaction ID" value="UER00672"/>
</dbReference>
<dbReference type="Proteomes" id="UP000008540">
    <property type="component" value="Chromosome"/>
</dbReference>
<dbReference type="GO" id="GO:0005829">
    <property type="term" value="C:cytosol"/>
    <property type="evidence" value="ECO:0007669"/>
    <property type="project" value="TreeGrafter"/>
</dbReference>
<dbReference type="GO" id="GO:0005524">
    <property type="term" value="F:ATP binding"/>
    <property type="evidence" value="ECO:0007669"/>
    <property type="project" value="UniProtKB-UniRule"/>
</dbReference>
<dbReference type="GO" id="GO:0004370">
    <property type="term" value="F:glycerol kinase activity"/>
    <property type="evidence" value="ECO:0000250"/>
    <property type="project" value="UniProtKB"/>
</dbReference>
<dbReference type="GO" id="GO:0019563">
    <property type="term" value="P:glycerol catabolic process"/>
    <property type="evidence" value="ECO:0007669"/>
    <property type="project" value="UniProtKB-UniRule"/>
</dbReference>
<dbReference type="GO" id="GO:0006071">
    <property type="term" value="P:glycerol metabolic process"/>
    <property type="evidence" value="ECO:0000250"/>
    <property type="project" value="UniProtKB"/>
</dbReference>
<dbReference type="GO" id="GO:0006072">
    <property type="term" value="P:glycerol-3-phosphate metabolic process"/>
    <property type="evidence" value="ECO:0007669"/>
    <property type="project" value="InterPro"/>
</dbReference>
<dbReference type="CDD" id="cd07786">
    <property type="entry name" value="FGGY_EcGK_like"/>
    <property type="match status" value="1"/>
</dbReference>
<dbReference type="FunFam" id="3.30.420.40:FF:000007">
    <property type="entry name" value="Glycerol kinase"/>
    <property type="match status" value="1"/>
</dbReference>
<dbReference type="FunFam" id="3.30.420.40:FF:000008">
    <property type="entry name" value="Glycerol kinase"/>
    <property type="match status" value="1"/>
</dbReference>
<dbReference type="Gene3D" id="3.30.420.40">
    <property type="match status" value="2"/>
</dbReference>
<dbReference type="HAMAP" id="MF_00186">
    <property type="entry name" value="Glycerol_kin"/>
    <property type="match status" value="1"/>
</dbReference>
<dbReference type="InterPro" id="IPR043129">
    <property type="entry name" value="ATPase_NBD"/>
</dbReference>
<dbReference type="InterPro" id="IPR000577">
    <property type="entry name" value="Carb_kinase_FGGY"/>
</dbReference>
<dbReference type="InterPro" id="IPR018483">
    <property type="entry name" value="Carb_kinase_FGGY_CS"/>
</dbReference>
<dbReference type="InterPro" id="IPR018485">
    <property type="entry name" value="FGGY_C"/>
</dbReference>
<dbReference type="InterPro" id="IPR018484">
    <property type="entry name" value="FGGY_N"/>
</dbReference>
<dbReference type="InterPro" id="IPR005999">
    <property type="entry name" value="Glycerol_kin"/>
</dbReference>
<dbReference type="NCBIfam" id="TIGR01311">
    <property type="entry name" value="glycerol_kin"/>
    <property type="match status" value="1"/>
</dbReference>
<dbReference type="NCBIfam" id="NF000756">
    <property type="entry name" value="PRK00047.1"/>
    <property type="match status" value="1"/>
</dbReference>
<dbReference type="PANTHER" id="PTHR10196:SF69">
    <property type="entry name" value="GLYCEROL KINASE"/>
    <property type="match status" value="1"/>
</dbReference>
<dbReference type="PANTHER" id="PTHR10196">
    <property type="entry name" value="SUGAR KINASE"/>
    <property type="match status" value="1"/>
</dbReference>
<dbReference type="Pfam" id="PF02782">
    <property type="entry name" value="FGGY_C"/>
    <property type="match status" value="1"/>
</dbReference>
<dbReference type="Pfam" id="PF00370">
    <property type="entry name" value="FGGY_N"/>
    <property type="match status" value="1"/>
</dbReference>
<dbReference type="PIRSF" id="PIRSF000538">
    <property type="entry name" value="GlpK"/>
    <property type="match status" value="1"/>
</dbReference>
<dbReference type="SUPFAM" id="SSF53067">
    <property type="entry name" value="Actin-like ATPase domain"/>
    <property type="match status" value="2"/>
</dbReference>
<dbReference type="PROSITE" id="PS00933">
    <property type="entry name" value="FGGY_KINASES_1"/>
    <property type="match status" value="1"/>
</dbReference>
<dbReference type="PROSITE" id="PS00445">
    <property type="entry name" value="FGGY_KINASES_2"/>
    <property type="match status" value="1"/>
</dbReference>